<protein>
    <recommendedName>
        <fullName evidence="2">Purine nucleoside phosphorylase DeoD-type</fullName>
        <shortName evidence="2">PNP</shortName>
        <ecNumber evidence="2">2.4.2.1</ecNumber>
    </recommendedName>
</protein>
<gene>
    <name evidence="2" type="primary">deoD</name>
    <name type="ordered locus">LAR_0108</name>
</gene>
<organism>
    <name type="scientific">Limosilactobacillus reuteri subsp. reuteri (strain JCM 1112)</name>
    <name type="common">Lactobacillus reuteri</name>
    <dbReference type="NCBI Taxonomy" id="557433"/>
    <lineage>
        <taxon>Bacteria</taxon>
        <taxon>Bacillati</taxon>
        <taxon>Bacillota</taxon>
        <taxon>Bacilli</taxon>
        <taxon>Lactobacillales</taxon>
        <taxon>Lactobacillaceae</taxon>
        <taxon>Limosilactobacillus</taxon>
    </lineage>
</organism>
<feature type="chain" id="PRO_1000186209" description="Purine nucleoside phosphorylase DeoD-type">
    <location>
        <begin position="1"/>
        <end position="236"/>
    </location>
</feature>
<feature type="active site" description="Proton donor" evidence="2">
    <location>
        <position position="204"/>
    </location>
</feature>
<feature type="binding site" evidence="1">
    <location>
        <position position="4"/>
    </location>
    <ligand>
        <name>a purine D-ribonucleoside</name>
        <dbReference type="ChEBI" id="CHEBI:142355"/>
        <note>ligand shared between dimeric partners</note>
    </ligand>
</feature>
<feature type="binding site" description="in other chain" evidence="1">
    <location>
        <position position="20"/>
    </location>
    <ligand>
        <name>phosphate</name>
        <dbReference type="ChEBI" id="CHEBI:43474"/>
        <note>ligand shared between dimeric partners</note>
    </ligand>
</feature>
<feature type="binding site" description="in other chain" evidence="1">
    <location>
        <position position="24"/>
    </location>
    <ligand>
        <name>phosphate</name>
        <dbReference type="ChEBI" id="CHEBI:43474"/>
        <note>ligand shared between dimeric partners</note>
    </ligand>
</feature>
<feature type="binding site" evidence="1">
    <location>
        <position position="43"/>
    </location>
    <ligand>
        <name>phosphate</name>
        <dbReference type="ChEBI" id="CHEBI:43474"/>
        <note>ligand shared between dimeric partners</note>
    </ligand>
</feature>
<feature type="binding site" description="in other chain" evidence="1">
    <location>
        <begin position="87"/>
        <end position="90"/>
    </location>
    <ligand>
        <name>phosphate</name>
        <dbReference type="ChEBI" id="CHEBI:43474"/>
        <note>ligand shared between dimeric partners</note>
    </ligand>
</feature>
<feature type="binding site" description="in other chain" evidence="1">
    <location>
        <begin position="179"/>
        <end position="181"/>
    </location>
    <ligand>
        <name>a purine D-ribonucleoside</name>
        <dbReference type="ChEBI" id="CHEBI:142355"/>
        <note>ligand shared between dimeric partners</note>
    </ligand>
</feature>
<feature type="binding site" description="in other chain" evidence="1">
    <location>
        <begin position="203"/>
        <end position="204"/>
    </location>
    <ligand>
        <name>a purine D-ribonucleoside</name>
        <dbReference type="ChEBI" id="CHEBI:142355"/>
        <note>ligand shared between dimeric partners</note>
    </ligand>
</feature>
<feature type="site" description="Important for catalytic activity" evidence="2">
    <location>
        <position position="217"/>
    </location>
</feature>
<accession>B2G592</accession>
<evidence type="ECO:0000250" key="1">
    <source>
        <dbReference type="UniProtKB" id="P50389"/>
    </source>
</evidence>
<evidence type="ECO:0000255" key="2">
    <source>
        <dbReference type="HAMAP-Rule" id="MF_01627"/>
    </source>
</evidence>
<sequence length="236" mass="25751">MSTHINAKMGDYADTVLLPGDPLRAKYIAENFLENVKQVNSVRNAFGYTGEYKGHRISVQGSGMGIPSMSIYINELVREFGVKTIIRVGSCGGIAPDVHVRDVLLAQGSSTDSAVTVNTFGPGFHYAPLADFKLLDTAYHVAGKLGIETKVGDIFAADRFYNDELDMEKLRDYGILGTEMESAGLYLLAAKLHFRALSVLTVSDLIFGDEKATAEERERTFNDMINISLETAIAGK</sequence>
<name>DEOD_LIMRJ</name>
<keyword id="KW-0328">Glycosyltransferase</keyword>
<keyword id="KW-0808">Transferase</keyword>
<proteinExistence type="inferred from homology"/>
<comment type="function">
    <text evidence="2">Catalyzes the reversible phosphorolytic breakdown of the N-glycosidic bond in the beta-(deoxy)ribonucleoside molecules, with the formation of the corresponding free purine bases and pentose-1-phosphate.</text>
</comment>
<comment type="catalytic activity">
    <reaction evidence="2">
        <text>a purine D-ribonucleoside + phosphate = a purine nucleobase + alpha-D-ribose 1-phosphate</text>
        <dbReference type="Rhea" id="RHEA:19805"/>
        <dbReference type="ChEBI" id="CHEBI:26386"/>
        <dbReference type="ChEBI" id="CHEBI:43474"/>
        <dbReference type="ChEBI" id="CHEBI:57720"/>
        <dbReference type="ChEBI" id="CHEBI:142355"/>
        <dbReference type="EC" id="2.4.2.1"/>
    </reaction>
</comment>
<comment type="catalytic activity">
    <reaction evidence="2">
        <text>a purine 2'-deoxy-D-ribonucleoside + phosphate = a purine nucleobase + 2-deoxy-alpha-D-ribose 1-phosphate</text>
        <dbReference type="Rhea" id="RHEA:36431"/>
        <dbReference type="ChEBI" id="CHEBI:26386"/>
        <dbReference type="ChEBI" id="CHEBI:43474"/>
        <dbReference type="ChEBI" id="CHEBI:57259"/>
        <dbReference type="ChEBI" id="CHEBI:142361"/>
        <dbReference type="EC" id="2.4.2.1"/>
    </reaction>
</comment>
<comment type="subunit">
    <text evidence="2">Homohexamer; trimer of homodimers.</text>
</comment>
<comment type="similarity">
    <text evidence="2">Belongs to the PNP/UDP phosphorylase family.</text>
</comment>
<reference key="1">
    <citation type="journal article" date="2008" name="DNA Res.">
        <title>Comparative genome analysis of Lactobacillus reuteri and Lactobacillus fermentum reveal a genomic island for reuterin and cobalamin production.</title>
        <authorList>
            <person name="Morita H."/>
            <person name="Toh H."/>
            <person name="Fukuda S."/>
            <person name="Horikawa H."/>
            <person name="Oshima K."/>
            <person name="Suzuki T."/>
            <person name="Murakami M."/>
            <person name="Hisamatsu S."/>
            <person name="Kato Y."/>
            <person name="Takizawa T."/>
            <person name="Fukuoka H."/>
            <person name="Yoshimura T."/>
            <person name="Itoh K."/>
            <person name="O'Sullivan D.J."/>
            <person name="McKay L.L."/>
            <person name="Ohno H."/>
            <person name="Kikuchi J."/>
            <person name="Masaoka T."/>
            <person name="Hattori M."/>
        </authorList>
    </citation>
    <scope>NUCLEOTIDE SEQUENCE [LARGE SCALE GENOMIC DNA]</scope>
    <source>
        <strain>JCM 1112</strain>
    </source>
</reference>
<dbReference type="EC" id="2.4.2.1" evidence="2"/>
<dbReference type="EMBL" id="AP007281">
    <property type="protein sequence ID" value="BAG24624.1"/>
    <property type="molecule type" value="Genomic_DNA"/>
</dbReference>
<dbReference type="RefSeq" id="WP_003665392.1">
    <property type="nucleotide sequence ID" value="NC_010609.1"/>
</dbReference>
<dbReference type="SMR" id="B2G592"/>
<dbReference type="GeneID" id="77190316"/>
<dbReference type="KEGG" id="lrf:LAR_0108"/>
<dbReference type="HOGENOM" id="CLU_068457_2_0_9"/>
<dbReference type="GO" id="GO:0005829">
    <property type="term" value="C:cytosol"/>
    <property type="evidence" value="ECO:0007669"/>
    <property type="project" value="TreeGrafter"/>
</dbReference>
<dbReference type="GO" id="GO:0004731">
    <property type="term" value="F:purine-nucleoside phosphorylase activity"/>
    <property type="evidence" value="ECO:0007669"/>
    <property type="project" value="UniProtKB-UniRule"/>
</dbReference>
<dbReference type="GO" id="GO:0006152">
    <property type="term" value="P:purine nucleoside catabolic process"/>
    <property type="evidence" value="ECO:0007669"/>
    <property type="project" value="TreeGrafter"/>
</dbReference>
<dbReference type="CDD" id="cd09006">
    <property type="entry name" value="PNP_EcPNPI-like"/>
    <property type="match status" value="1"/>
</dbReference>
<dbReference type="Gene3D" id="3.40.50.1580">
    <property type="entry name" value="Nucleoside phosphorylase domain"/>
    <property type="match status" value="1"/>
</dbReference>
<dbReference type="HAMAP" id="MF_01627">
    <property type="entry name" value="Pur_nucleosid_phosp"/>
    <property type="match status" value="1"/>
</dbReference>
<dbReference type="InterPro" id="IPR004402">
    <property type="entry name" value="DeoD-type"/>
</dbReference>
<dbReference type="InterPro" id="IPR018016">
    <property type="entry name" value="Nucleoside_phosphorylase_CS"/>
</dbReference>
<dbReference type="InterPro" id="IPR000845">
    <property type="entry name" value="Nucleoside_phosphorylase_d"/>
</dbReference>
<dbReference type="InterPro" id="IPR035994">
    <property type="entry name" value="Nucleoside_phosphorylase_sf"/>
</dbReference>
<dbReference type="NCBIfam" id="TIGR00107">
    <property type="entry name" value="deoD"/>
    <property type="match status" value="1"/>
</dbReference>
<dbReference type="NCBIfam" id="NF004489">
    <property type="entry name" value="PRK05819.1"/>
    <property type="match status" value="1"/>
</dbReference>
<dbReference type="PANTHER" id="PTHR43691:SF11">
    <property type="entry name" value="FI09636P-RELATED"/>
    <property type="match status" value="1"/>
</dbReference>
<dbReference type="PANTHER" id="PTHR43691">
    <property type="entry name" value="URIDINE PHOSPHORYLASE"/>
    <property type="match status" value="1"/>
</dbReference>
<dbReference type="Pfam" id="PF01048">
    <property type="entry name" value="PNP_UDP_1"/>
    <property type="match status" value="1"/>
</dbReference>
<dbReference type="SUPFAM" id="SSF53167">
    <property type="entry name" value="Purine and uridine phosphorylases"/>
    <property type="match status" value="1"/>
</dbReference>
<dbReference type="PROSITE" id="PS01232">
    <property type="entry name" value="PNP_UDP_1"/>
    <property type="match status" value="1"/>
</dbReference>